<proteinExistence type="evidence at transcript level"/>
<name>C75A3_PETHY</name>
<gene>
    <name type="primary">CYP75A3</name>
    <name type="synonym">HF2</name>
</gene>
<accession>P48419</accession>
<sequence length="508" mass="56721">MVLLSELAAATLIFLTTHIFISTLLSITNGRRLPPGPRGWPVIGALPLLGAMPHVSLAKMAKKYGAIMYLKVGTCGMVVASTPDAAKAFLKTLDLNFSNRPPNAGATHLAYGAQDMVFAHYGPRWKLLRKLSNLHMLGGKALENWANVRANELGHMLKSMFDMSREGERVVVAEMLTFAMANMIGQVILSKRVFVNKGVEVNEFKDMVVELMTTAGYFNIGDFIPCLAWMDLQGIEKGMKRLHKKFDALLTKMFDEHKATSYERKGKPDFLDCVMENRDNSEGERLSTTNIKALLLNLFTAGTDTSSSAIEWALAEMMKNPAILKKAQGEMDQVIGNNRRLLESDIPNLPYLRAICKETFRKHPSTPLNLPRISNEPCIVDGYYIPKNTRLSVNIWAIGRDPEVWENPLEFYPERFLSGRNSKIDPRGNDFELIPFGAGRRICAGTRMGIVMVEYILGTLVHSFDWKLPSEVIELNMEEAFGLALQKAVPLEAMVTPRLPIDVYAPLA</sequence>
<comment type="function">
    <text evidence="2">Catalyzes the 3'5'-hydroxylation of naringenin and eriodictyol to form 5,7,3,'4',5'-pentahydroxyflavanone and 3',5'-hydroxylation of dihydrokaempferol and dihydroquercetin to form dihydromyricetin.</text>
</comment>
<comment type="catalytic activity">
    <reaction evidence="2">
        <text>a 3',5'-unsubstituted flavanone + 2 reduced [NADPH--hemoprotein reductase] + 2 O2 = a 3',5'-dihydroxyflavanone + 2 oxidized [NADPH--hemoprotein reductase] + 2 H2O + 2 H(+)</text>
        <dbReference type="Rhea" id="RHEA:55448"/>
        <dbReference type="Rhea" id="RHEA-COMP:11964"/>
        <dbReference type="Rhea" id="RHEA-COMP:11965"/>
        <dbReference type="ChEBI" id="CHEBI:15377"/>
        <dbReference type="ChEBI" id="CHEBI:15378"/>
        <dbReference type="ChEBI" id="CHEBI:15379"/>
        <dbReference type="ChEBI" id="CHEBI:48025"/>
        <dbReference type="ChEBI" id="CHEBI:57618"/>
        <dbReference type="ChEBI" id="CHEBI:58210"/>
        <dbReference type="ChEBI" id="CHEBI:138897"/>
        <dbReference type="EC" id="1.14.14.81"/>
    </reaction>
</comment>
<comment type="cofactor">
    <cofactor evidence="1">
        <name>heme</name>
        <dbReference type="ChEBI" id="CHEBI:30413"/>
    </cofactor>
</comment>
<comment type="pathway">
    <text>Pigment biosynthesis; anthocyanin biosynthesis.</text>
</comment>
<comment type="subcellular location">
    <subcellularLocation>
        <location evidence="3">Microsome</location>
    </subcellularLocation>
    <subcellularLocation>
        <location evidence="1">Endoplasmic reticulum</location>
    </subcellularLocation>
</comment>
<comment type="tissue specificity">
    <text>Flowers.</text>
</comment>
<comment type="similarity">
    <text evidence="3">Belongs to the cytochrome P450 family.</text>
</comment>
<feature type="chain" id="PRO_0000052130" description="Flavonoid 3',5'-hydroxylase 2">
    <location>
        <begin position="1"/>
        <end position="508"/>
    </location>
</feature>
<feature type="binding site" description="axial binding residue" evidence="1">
    <location>
        <position position="443"/>
    </location>
    <ligand>
        <name>heme</name>
        <dbReference type="ChEBI" id="CHEBI:30413"/>
    </ligand>
    <ligandPart>
        <name>Fe</name>
        <dbReference type="ChEBI" id="CHEBI:18248"/>
    </ligandPart>
</feature>
<protein>
    <recommendedName>
        <fullName>Flavonoid 3',5'-hydroxylase 2</fullName>
        <shortName>F3'5'H</shortName>
        <ecNumber evidence="2">1.14.14.81</ecNumber>
    </recommendedName>
    <alternativeName>
        <fullName>CYPLXXVA3</fullName>
    </alternativeName>
    <alternativeName>
        <fullName>Cytochrome P450 75A3</fullName>
    </alternativeName>
</protein>
<dbReference type="EC" id="1.14.14.81" evidence="2"/>
<dbReference type="EMBL" id="Z22544">
    <property type="protein sequence ID" value="CAA80265.1"/>
    <property type="molecule type" value="mRNA"/>
</dbReference>
<dbReference type="PIR" id="S38984">
    <property type="entry name" value="S38984"/>
</dbReference>
<dbReference type="SMR" id="P48419"/>
<dbReference type="BioCyc" id="MetaCyc:MONOMER-12019"/>
<dbReference type="UniPathway" id="UPA00009"/>
<dbReference type="GO" id="GO:0005783">
    <property type="term" value="C:endoplasmic reticulum"/>
    <property type="evidence" value="ECO:0007669"/>
    <property type="project" value="UniProtKB-SubCell"/>
</dbReference>
<dbReference type="GO" id="GO:0033772">
    <property type="term" value="F:flavonoid 3',5'-hydroxylase activity"/>
    <property type="evidence" value="ECO:0007669"/>
    <property type="project" value="UniProtKB-EC"/>
</dbReference>
<dbReference type="GO" id="GO:0020037">
    <property type="term" value="F:heme binding"/>
    <property type="evidence" value="ECO:0007669"/>
    <property type="project" value="InterPro"/>
</dbReference>
<dbReference type="GO" id="GO:0005506">
    <property type="term" value="F:iron ion binding"/>
    <property type="evidence" value="ECO:0007669"/>
    <property type="project" value="InterPro"/>
</dbReference>
<dbReference type="GO" id="GO:0009718">
    <property type="term" value="P:anthocyanin-containing compound biosynthetic process"/>
    <property type="evidence" value="ECO:0007669"/>
    <property type="project" value="UniProtKB-UniPathway"/>
</dbReference>
<dbReference type="CDD" id="cd20657">
    <property type="entry name" value="CYP75"/>
    <property type="match status" value="1"/>
</dbReference>
<dbReference type="FunFam" id="1.10.630.10:FF:000111">
    <property type="entry name" value="Flavonoid 3',5'-hydroxylase 2"/>
    <property type="match status" value="1"/>
</dbReference>
<dbReference type="Gene3D" id="1.10.630.10">
    <property type="entry name" value="Cytochrome P450"/>
    <property type="match status" value="1"/>
</dbReference>
<dbReference type="InterPro" id="IPR001128">
    <property type="entry name" value="Cyt_P450"/>
</dbReference>
<dbReference type="InterPro" id="IPR017972">
    <property type="entry name" value="Cyt_P450_CS"/>
</dbReference>
<dbReference type="InterPro" id="IPR002401">
    <property type="entry name" value="Cyt_P450_E_grp-I"/>
</dbReference>
<dbReference type="InterPro" id="IPR036396">
    <property type="entry name" value="Cyt_P450_sf"/>
</dbReference>
<dbReference type="PANTHER" id="PTHR47944">
    <property type="entry name" value="CYTOCHROME P450 98A9"/>
    <property type="match status" value="1"/>
</dbReference>
<dbReference type="PANTHER" id="PTHR47944:SF18">
    <property type="entry name" value="FLAVONOID 3'-MONOOXYGENASE"/>
    <property type="match status" value="1"/>
</dbReference>
<dbReference type="Pfam" id="PF00067">
    <property type="entry name" value="p450"/>
    <property type="match status" value="1"/>
</dbReference>
<dbReference type="PRINTS" id="PR00463">
    <property type="entry name" value="EP450I"/>
</dbReference>
<dbReference type="PRINTS" id="PR00385">
    <property type="entry name" value="P450"/>
</dbReference>
<dbReference type="SUPFAM" id="SSF48264">
    <property type="entry name" value="Cytochrome P450"/>
    <property type="match status" value="1"/>
</dbReference>
<dbReference type="PROSITE" id="PS00086">
    <property type="entry name" value="CYTOCHROME_P450"/>
    <property type="match status" value="1"/>
</dbReference>
<reference key="1">
    <citation type="journal article" date="1993" name="Nature">
        <title>Cloning and expression of cytochrome P450 genes controlling flower colour.</title>
        <authorList>
            <person name="Holton T.A."/>
            <person name="Brugliera F."/>
            <person name="Lester D.R."/>
            <person name="Tanaka Y."/>
            <person name="Hyland C.D."/>
            <person name="Menting J.G.T."/>
            <person name="Lu C.-Y."/>
            <person name="Farcy E."/>
            <person name="Stevenson T.W."/>
            <person name="Cornish E.C."/>
        </authorList>
    </citation>
    <scope>NUCLEOTIDE SEQUENCE [MRNA]</scope>
    <source>
        <strain>cv. Old Glory Blue</strain>
        <tissue>Petal</tissue>
    </source>
</reference>
<keyword id="KW-0256">Endoplasmic reticulum</keyword>
<keyword id="KW-0349">Heme</keyword>
<keyword id="KW-0408">Iron</keyword>
<keyword id="KW-0479">Metal-binding</keyword>
<keyword id="KW-0492">Microsome</keyword>
<keyword id="KW-0503">Monooxygenase</keyword>
<keyword id="KW-0521">NADP</keyword>
<keyword id="KW-0560">Oxidoreductase</keyword>
<evidence type="ECO:0000250" key="1"/>
<evidence type="ECO:0000250" key="2">
    <source>
        <dbReference type="UniProtKB" id="P48418"/>
    </source>
</evidence>
<evidence type="ECO:0000305" key="3"/>
<organism>
    <name type="scientific">Petunia hybrida</name>
    <name type="common">Petunia</name>
    <dbReference type="NCBI Taxonomy" id="4102"/>
    <lineage>
        <taxon>Eukaryota</taxon>
        <taxon>Viridiplantae</taxon>
        <taxon>Streptophyta</taxon>
        <taxon>Embryophyta</taxon>
        <taxon>Tracheophyta</taxon>
        <taxon>Spermatophyta</taxon>
        <taxon>Magnoliopsida</taxon>
        <taxon>eudicotyledons</taxon>
        <taxon>Gunneridae</taxon>
        <taxon>Pentapetalae</taxon>
        <taxon>asterids</taxon>
        <taxon>lamiids</taxon>
        <taxon>Solanales</taxon>
        <taxon>Solanaceae</taxon>
        <taxon>Petunioideae</taxon>
        <taxon>Petunia</taxon>
    </lineage>
</organism>